<comment type="function">
    <text evidence="1">One of the primary rRNA binding proteins. Required for association of the 30S and 50S subunits to form the 70S ribosome, for tRNA binding and peptide bond formation. It has been suggested to have peptidyltransferase activity; this is somewhat controversial. Makes several contacts with the 16S rRNA in the 70S ribosome (By similarity).</text>
</comment>
<comment type="subunit">
    <text evidence="1 3 4">Part of the 50S ribosomal subunit. Forms a bridge to the 30S subunit in the 70S ribosome (By similarity). Interacts weakly with protein L37Ae.</text>
</comment>
<comment type="miscellaneous">
    <text>This protein can be partially incorporated into E.coli polysomes in vivo, indicating it can replace the endogenous protein.</text>
</comment>
<comment type="similarity">
    <text evidence="6">Belongs to the universal ribosomal protein uL2 family.</text>
</comment>
<name>RL2_HALMA</name>
<keyword id="KW-0002">3D-structure</keyword>
<keyword id="KW-0903">Direct protein sequencing</keyword>
<keyword id="KW-1185">Reference proteome</keyword>
<keyword id="KW-0687">Ribonucleoprotein</keyword>
<keyword id="KW-0689">Ribosomal protein</keyword>
<keyword id="KW-0694">RNA-binding</keyword>
<keyword id="KW-0699">rRNA-binding</keyword>
<feature type="initiator methionine" description="Removed">
    <location>
        <position position="1"/>
    </location>
</feature>
<feature type="chain" id="PRO_0000129712" description="Large ribosomal subunit protein uL2">
    <location>
        <begin position="2"/>
        <end position="240"/>
    </location>
</feature>
<feature type="region of interest" description="Disordered" evidence="2">
    <location>
        <begin position="200"/>
        <end position="240"/>
    </location>
</feature>
<feature type="mutagenesis site" description="No incorporation into translating E.coli polysomes; ribosomes assemble normally. Significantly reduced translational activity." evidence="5">
    <original>H</original>
    <variation>A</variation>
    <variation>G</variation>
    <location>
        <position position="200"/>
    </location>
</feature>
<feature type="sequence conflict" description="In Ref. 1; AAA86862." evidence="6" ref="1">
    <original>S</original>
    <variation>D</variation>
    <location>
        <position position="86"/>
    </location>
</feature>
<feature type="sequence conflict" description="In Ref. 1; AAA86862." evidence="6" ref="1">
    <original>A</original>
    <variation>G</variation>
    <location>
        <position position="161"/>
    </location>
</feature>
<feature type="helix" evidence="7">
    <location>
        <begin position="6"/>
        <end position="10"/>
    </location>
</feature>
<feature type="helix" evidence="7">
    <location>
        <begin position="15"/>
        <end position="17"/>
    </location>
</feature>
<feature type="helix" evidence="7">
    <location>
        <begin position="21"/>
        <end position="23"/>
    </location>
</feature>
<feature type="strand" evidence="7">
    <location>
        <begin position="35"/>
        <end position="37"/>
    </location>
</feature>
<feature type="strand" evidence="7">
    <location>
        <begin position="40"/>
        <end position="48"/>
    </location>
</feature>
<feature type="turn" evidence="7">
    <location>
        <begin position="50"/>
        <end position="52"/>
    </location>
</feature>
<feature type="strand" evidence="7">
    <location>
        <begin position="53"/>
        <end position="61"/>
    </location>
</feature>
<feature type="turn" evidence="8">
    <location>
        <begin position="62"/>
        <end position="64"/>
    </location>
</feature>
<feature type="strand" evidence="7">
    <location>
        <begin position="66"/>
        <end position="69"/>
    </location>
</feature>
<feature type="strand" evidence="8">
    <location>
        <begin position="72"/>
        <end position="74"/>
    </location>
</feature>
<feature type="strand" evidence="9">
    <location>
        <begin position="76"/>
        <end position="78"/>
    </location>
</feature>
<feature type="strand" evidence="7">
    <location>
        <begin position="80"/>
        <end position="84"/>
    </location>
</feature>
<feature type="strand" evidence="7">
    <location>
        <begin position="94"/>
        <end position="96"/>
    </location>
</feature>
<feature type="helix" evidence="7">
    <location>
        <begin position="97"/>
        <end position="99"/>
    </location>
</feature>
<feature type="strand" evidence="7">
    <location>
        <begin position="105"/>
        <end position="109"/>
    </location>
</feature>
<feature type="strand" evidence="7">
    <location>
        <begin position="127"/>
        <end position="131"/>
    </location>
</feature>
<feature type="strand" evidence="7">
    <location>
        <begin position="137"/>
        <end position="140"/>
    </location>
</feature>
<feature type="turn" evidence="11">
    <location>
        <begin position="142"/>
        <end position="144"/>
    </location>
</feature>
<feature type="strand" evidence="7">
    <location>
        <begin position="146"/>
        <end position="149"/>
    </location>
</feature>
<feature type="strand" evidence="7">
    <location>
        <begin position="154"/>
        <end position="158"/>
    </location>
</feature>
<feature type="turn" evidence="7">
    <location>
        <begin position="161"/>
        <end position="167"/>
    </location>
</feature>
<feature type="helix" evidence="7">
    <location>
        <begin position="173"/>
        <end position="180"/>
    </location>
</feature>
<feature type="turn" evidence="10">
    <location>
        <begin position="181"/>
        <end position="184"/>
    </location>
</feature>
<feature type="helix" evidence="7">
    <location>
        <begin position="192"/>
        <end position="194"/>
    </location>
</feature>
<feature type="helix" evidence="7">
    <location>
        <begin position="197"/>
        <end position="199"/>
    </location>
</feature>
<feature type="strand" evidence="7">
    <location>
        <begin position="205"/>
        <end position="207"/>
    </location>
</feature>
<feature type="strand" evidence="7">
    <location>
        <begin position="214"/>
        <end position="216"/>
    </location>
</feature>
<feature type="turn" evidence="7">
    <location>
        <begin position="222"/>
        <end position="224"/>
    </location>
</feature>
<feature type="strand" evidence="7">
    <location>
        <begin position="227"/>
        <end position="229"/>
    </location>
</feature>
<accession>P20276</accession>
<accession>Q5V1S7</accession>
<dbReference type="EMBL" id="J05222">
    <property type="protein sequence ID" value="AAA86862.1"/>
    <property type="molecule type" value="Genomic_DNA"/>
</dbReference>
<dbReference type="EMBL" id="AY596297">
    <property type="protein sequence ID" value="AAV46525.1"/>
    <property type="molecule type" value="Genomic_DNA"/>
</dbReference>
<dbReference type="PIR" id="F35063">
    <property type="entry name" value="R5HS2L"/>
</dbReference>
<dbReference type="RefSeq" id="WP_004957415.1">
    <property type="nucleotide sequence ID" value="NZ_CP039138.1"/>
</dbReference>
<dbReference type="PDB" id="1C04">
    <property type="method" value="X-ray"/>
    <property type="resolution" value="5.00 A"/>
    <property type="chains" value="A=46-145"/>
</dbReference>
<dbReference type="PDB" id="1FFK">
    <property type="method" value="X-ray"/>
    <property type="resolution" value="2.40 A"/>
    <property type="chains" value="A=2-240"/>
</dbReference>
<dbReference type="PDB" id="1JJ2">
    <property type="method" value="X-ray"/>
    <property type="resolution" value="2.40 A"/>
    <property type="chains" value="A=2-240"/>
</dbReference>
<dbReference type="PDB" id="1K73">
    <property type="method" value="X-ray"/>
    <property type="resolution" value="3.01 A"/>
    <property type="chains" value="C=2-240"/>
</dbReference>
<dbReference type="PDB" id="1K8A">
    <property type="method" value="X-ray"/>
    <property type="resolution" value="3.00 A"/>
    <property type="chains" value="C=2-240"/>
</dbReference>
<dbReference type="PDB" id="1K9M">
    <property type="method" value="X-ray"/>
    <property type="resolution" value="3.00 A"/>
    <property type="chains" value="C=2-240"/>
</dbReference>
<dbReference type="PDB" id="1KC8">
    <property type="method" value="X-ray"/>
    <property type="resolution" value="3.01 A"/>
    <property type="chains" value="C=2-240"/>
</dbReference>
<dbReference type="PDB" id="1KD1">
    <property type="method" value="X-ray"/>
    <property type="resolution" value="3.00 A"/>
    <property type="chains" value="C=2-240"/>
</dbReference>
<dbReference type="PDB" id="1KQS">
    <property type="method" value="X-ray"/>
    <property type="resolution" value="3.10 A"/>
    <property type="chains" value="A=2-240"/>
</dbReference>
<dbReference type="PDB" id="1M1K">
    <property type="method" value="X-ray"/>
    <property type="resolution" value="3.20 A"/>
    <property type="chains" value="C=2-240"/>
</dbReference>
<dbReference type="PDB" id="1M90">
    <property type="method" value="X-ray"/>
    <property type="resolution" value="2.80 A"/>
    <property type="chains" value="C=2-240"/>
</dbReference>
<dbReference type="PDB" id="1ML5">
    <property type="method" value="EM"/>
    <property type="resolution" value="14.00 A"/>
    <property type="chains" value="d=163-203"/>
</dbReference>
<dbReference type="PDB" id="1N8R">
    <property type="method" value="X-ray"/>
    <property type="resolution" value="3.00 A"/>
    <property type="chains" value="C=2-240"/>
</dbReference>
<dbReference type="PDB" id="1NJI">
    <property type="method" value="X-ray"/>
    <property type="resolution" value="3.00 A"/>
    <property type="chains" value="C=2-240"/>
</dbReference>
<dbReference type="PDB" id="1Q7Y">
    <property type="method" value="X-ray"/>
    <property type="resolution" value="3.20 A"/>
    <property type="chains" value="C=2-240"/>
</dbReference>
<dbReference type="PDB" id="1Q81">
    <property type="method" value="X-ray"/>
    <property type="resolution" value="2.95 A"/>
    <property type="chains" value="C=2-240"/>
</dbReference>
<dbReference type="PDB" id="1Q82">
    <property type="method" value="X-ray"/>
    <property type="resolution" value="2.98 A"/>
    <property type="chains" value="C=2-240"/>
</dbReference>
<dbReference type="PDB" id="1Q86">
    <property type="method" value="X-ray"/>
    <property type="resolution" value="3.00 A"/>
    <property type="chains" value="C=2-240"/>
</dbReference>
<dbReference type="PDB" id="1QVF">
    <property type="method" value="X-ray"/>
    <property type="resolution" value="3.10 A"/>
    <property type="chains" value="A=2-240"/>
</dbReference>
<dbReference type="PDB" id="1QVG">
    <property type="method" value="X-ray"/>
    <property type="resolution" value="2.90 A"/>
    <property type="chains" value="A=2-240"/>
</dbReference>
<dbReference type="PDB" id="1S72">
    <property type="method" value="X-ray"/>
    <property type="resolution" value="2.40 A"/>
    <property type="chains" value="A=1-240"/>
</dbReference>
<dbReference type="PDB" id="1VQ4">
    <property type="method" value="X-ray"/>
    <property type="resolution" value="2.70 A"/>
    <property type="chains" value="A=1-240"/>
</dbReference>
<dbReference type="PDB" id="1VQ5">
    <property type="method" value="X-ray"/>
    <property type="resolution" value="2.60 A"/>
    <property type="chains" value="A=1-240"/>
</dbReference>
<dbReference type="PDB" id="1VQ6">
    <property type="method" value="X-ray"/>
    <property type="resolution" value="2.70 A"/>
    <property type="chains" value="A=1-240"/>
</dbReference>
<dbReference type="PDB" id="1VQ7">
    <property type="method" value="X-ray"/>
    <property type="resolution" value="2.50 A"/>
    <property type="chains" value="A=1-240"/>
</dbReference>
<dbReference type="PDB" id="1VQ8">
    <property type="method" value="X-ray"/>
    <property type="resolution" value="2.20 A"/>
    <property type="chains" value="A=1-240"/>
</dbReference>
<dbReference type="PDB" id="1VQ9">
    <property type="method" value="X-ray"/>
    <property type="resolution" value="2.40 A"/>
    <property type="chains" value="A=1-240"/>
</dbReference>
<dbReference type="PDB" id="1VQK">
    <property type="method" value="X-ray"/>
    <property type="resolution" value="2.30 A"/>
    <property type="chains" value="A=1-240"/>
</dbReference>
<dbReference type="PDB" id="1VQL">
    <property type="method" value="X-ray"/>
    <property type="resolution" value="2.30 A"/>
    <property type="chains" value="A=1-240"/>
</dbReference>
<dbReference type="PDB" id="1VQM">
    <property type="method" value="X-ray"/>
    <property type="resolution" value="2.30 A"/>
    <property type="chains" value="A=1-240"/>
</dbReference>
<dbReference type="PDB" id="1VQN">
    <property type="method" value="X-ray"/>
    <property type="resolution" value="2.40 A"/>
    <property type="chains" value="A=1-240"/>
</dbReference>
<dbReference type="PDB" id="1VQO">
    <property type="method" value="X-ray"/>
    <property type="resolution" value="2.20 A"/>
    <property type="chains" value="A=1-240"/>
</dbReference>
<dbReference type="PDB" id="1VQP">
    <property type="method" value="X-ray"/>
    <property type="resolution" value="2.25 A"/>
    <property type="chains" value="A=1-240"/>
</dbReference>
<dbReference type="PDB" id="1W2B">
    <property type="method" value="X-ray"/>
    <property type="resolution" value="3.50 A"/>
    <property type="chains" value="A=2-240"/>
</dbReference>
<dbReference type="PDB" id="1YHQ">
    <property type="method" value="X-ray"/>
    <property type="resolution" value="2.40 A"/>
    <property type="chains" value="A=1-240"/>
</dbReference>
<dbReference type="PDB" id="1YI2">
    <property type="method" value="X-ray"/>
    <property type="resolution" value="2.65 A"/>
    <property type="chains" value="A=1-240"/>
</dbReference>
<dbReference type="PDB" id="1YIJ">
    <property type="method" value="X-ray"/>
    <property type="resolution" value="2.60 A"/>
    <property type="chains" value="A=1-240"/>
</dbReference>
<dbReference type="PDB" id="1YIT">
    <property type="method" value="X-ray"/>
    <property type="resolution" value="2.80 A"/>
    <property type="chains" value="A=1-240"/>
</dbReference>
<dbReference type="PDB" id="1YJ9">
    <property type="method" value="X-ray"/>
    <property type="resolution" value="2.90 A"/>
    <property type="chains" value="A=1-240"/>
</dbReference>
<dbReference type="PDB" id="1YJN">
    <property type="method" value="X-ray"/>
    <property type="resolution" value="3.00 A"/>
    <property type="chains" value="A=1-240"/>
</dbReference>
<dbReference type="PDB" id="1YJW">
    <property type="method" value="X-ray"/>
    <property type="resolution" value="2.90 A"/>
    <property type="chains" value="A=1-240"/>
</dbReference>
<dbReference type="PDB" id="2OTJ">
    <property type="method" value="X-ray"/>
    <property type="resolution" value="2.90 A"/>
    <property type="chains" value="A=1-240"/>
</dbReference>
<dbReference type="PDB" id="2OTL">
    <property type="method" value="X-ray"/>
    <property type="resolution" value="2.70 A"/>
    <property type="chains" value="A=2-240"/>
</dbReference>
<dbReference type="PDB" id="2QA4">
    <property type="method" value="X-ray"/>
    <property type="resolution" value="3.00 A"/>
    <property type="chains" value="A=1-240"/>
</dbReference>
<dbReference type="PDB" id="2QEX">
    <property type="method" value="X-ray"/>
    <property type="resolution" value="2.90 A"/>
    <property type="chains" value="A=1-240"/>
</dbReference>
<dbReference type="PDB" id="3CC2">
    <property type="method" value="X-ray"/>
    <property type="resolution" value="2.40 A"/>
    <property type="chains" value="A=1-240"/>
</dbReference>
<dbReference type="PDB" id="3CC4">
    <property type="method" value="X-ray"/>
    <property type="resolution" value="2.70 A"/>
    <property type="chains" value="A=1-240"/>
</dbReference>
<dbReference type="PDB" id="3CC7">
    <property type="method" value="X-ray"/>
    <property type="resolution" value="2.70 A"/>
    <property type="chains" value="A=1-240"/>
</dbReference>
<dbReference type="PDB" id="3CCE">
    <property type="method" value="X-ray"/>
    <property type="resolution" value="2.75 A"/>
    <property type="chains" value="A=1-240"/>
</dbReference>
<dbReference type="PDB" id="3CCJ">
    <property type="method" value="X-ray"/>
    <property type="resolution" value="2.70 A"/>
    <property type="chains" value="A=1-240"/>
</dbReference>
<dbReference type="PDB" id="3CCL">
    <property type="method" value="X-ray"/>
    <property type="resolution" value="2.90 A"/>
    <property type="chains" value="A=1-240"/>
</dbReference>
<dbReference type="PDB" id="3CCM">
    <property type="method" value="X-ray"/>
    <property type="resolution" value="2.55 A"/>
    <property type="chains" value="A=1-240"/>
</dbReference>
<dbReference type="PDB" id="3CCQ">
    <property type="method" value="X-ray"/>
    <property type="resolution" value="2.90 A"/>
    <property type="chains" value="A=1-240"/>
</dbReference>
<dbReference type="PDB" id="3CCR">
    <property type="method" value="X-ray"/>
    <property type="resolution" value="3.00 A"/>
    <property type="chains" value="A=1-240"/>
</dbReference>
<dbReference type="PDB" id="3CCS">
    <property type="method" value="X-ray"/>
    <property type="resolution" value="2.95 A"/>
    <property type="chains" value="A=1-240"/>
</dbReference>
<dbReference type="PDB" id="3CCU">
    <property type="method" value="X-ray"/>
    <property type="resolution" value="2.80 A"/>
    <property type="chains" value="A=1-240"/>
</dbReference>
<dbReference type="PDB" id="3CCV">
    <property type="method" value="X-ray"/>
    <property type="resolution" value="2.90 A"/>
    <property type="chains" value="A=1-240"/>
</dbReference>
<dbReference type="PDB" id="3CD6">
    <property type="method" value="X-ray"/>
    <property type="resolution" value="2.75 A"/>
    <property type="chains" value="A=1-240"/>
</dbReference>
<dbReference type="PDB" id="3CMA">
    <property type="method" value="X-ray"/>
    <property type="resolution" value="2.80 A"/>
    <property type="chains" value="A=1-240"/>
</dbReference>
<dbReference type="PDB" id="3CME">
    <property type="method" value="X-ray"/>
    <property type="resolution" value="2.95 A"/>
    <property type="chains" value="A=1-240"/>
</dbReference>
<dbReference type="PDB" id="3CPW">
    <property type="method" value="X-ray"/>
    <property type="resolution" value="2.70 A"/>
    <property type="chains" value="A=1-240"/>
</dbReference>
<dbReference type="PDB" id="3CXC">
    <property type="method" value="X-ray"/>
    <property type="resolution" value="3.00 A"/>
    <property type="chains" value="A=2-240"/>
</dbReference>
<dbReference type="PDB" id="3G4S">
    <property type="method" value="X-ray"/>
    <property type="resolution" value="3.20 A"/>
    <property type="chains" value="A=2-238"/>
</dbReference>
<dbReference type="PDB" id="3G6E">
    <property type="method" value="X-ray"/>
    <property type="resolution" value="2.70 A"/>
    <property type="chains" value="A=2-238"/>
</dbReference>
<dbReference type="PDB" id="3G71">
    <property type="method" value="X-ray"/>
    <property type="resolution" value="2.85 A"/>
    <property type="chains" value="A=2-238"/>
</dbReference>
<dbReference type="PDB" id="3I55">
    <property type="method" value="X-ray"/>
    <property type="resolution" value="3.11 A"/>
    <property type="chains" value="A=1-240"/>
</dbReference>
<dbReference type="PDB" id="3I56">
    <property type="method" value="X-ray"/>
    <property type="resolution" value="2.90 A"/>
    <property type="chains" value="A=1-240"/>
</dbReference>
<dbReference type="PDB" id="3OW2">
    <property type="method" value="X-ray"/>
    <property type="resolution" value="2.70 A"/>
    <property type="chains" value="A=2-238"/>
</dbReference>
<dbReference type="PDB" id="4ADX">
    <property type="method" value="EM"/>
    <property type="resolution" value="6.60 A"/>
    <property type="chains" value="A=1-240"/>
</dbReference>
<dbReference type="PDB" id="4V42">
    <property type="method" value="X-ray"/>
    <property type="resolution" value="5.50 A"/>
    <property type="chains" value="BD=163-203"/>
</dbReference>
<dbReference type="PDB" id="4V9F">
    <property type="method" value="X-ray"/>
    <property type="resolution" value="2.40 A"/>
    <property type="chains" value="A=1-240"/>
</dbReference>
<dbReference type="PDBsum" id="1C04"/>
<dbReference type="PDBsum" id="1FFK"/>
<dbReference type="PDBsum" id="1JJ2"/>
<dbReference type="PDBsum" id="1K73"/>
<dbReference type="PDBsum" id="1K8A"/>
<dbReference type="PDBsum" id="1K9M"/>
<dbReference type="PDBsum" id="1KC8"/>
<dbReference type="PDBsum" id="1KD1"/>
<dbReference type="PDBsum" id="1KQS"/>
<dbReference type="PDBsum" id="1M1K"/>
<dbReference type="PDBsum" id="1M90"/>
<dbReference type="PDBsum" id="1ML5"/>
<dbReference type="PDBsum" id="1N8R"/>
<dbReference type="PDBsum" id="1NJI"/>
<dbReference type="PDBsum" id="1Q7Y"/>
<dbReference type="PDBsum" id="1Q81"/>
<dbReference type="PDBsum" id="1Q82"/>
<dbReference type="PDBsum" id="1Q86"/>
<dbReference type="PDBsum" id="1QVF"/>
<dbReference type="PDBsum" id="1QVG"/>
<dbReference type="PDBsum" id="1S72"/>
<dbReference type="PDBsum" id="1VQ4"/>
<dbReference type="PDBsum" id="1VQ5"/>
<dbReference type="PDBsum" id="1VQ6"/>
<dbReference type="PDBsum" id="1VQ7"/>
<dbReference type="PDBsum" id="1VQ8"/>
<dbReference type="PDBsum" id="1VQ9"/>
<dbReference type="PDBsum" id="1VQK"/>
<dbReference type="PDBsum" id="1VQL"/>
<dbReference type="PDBsum" id="1VQM"/>
<dbReference type="PDBsum" id="1VQN"/>
<dbReference type="PDBsum" id="1VQO"/>
<dbReference type="PDBsum" id="1VQP"/>
<dbReference type="PDBsum" id="1W2B"/>
<dbReference type="PDBsum" id="1YHQ"/>
<dbReference type="PDBsum" id="1YI2"/>
<dbReference type="PDBsum" id="1YIJ"/>
<dbReference type="PDBsum" id="1YIT"/>
<dbReference type="PDBsum" id="1YJ9"/>
<dbReference type="PDBsum" id="1YJN"/>
<dbReference type="PDBsum" id="1YJW"/>
<dbReference type="PDBsum" id="2OTJ"/>
<dbReference type="PDBsum" id="2OTL"/>
<dbReference type="PDBsum" id="2QA4"/>
<dbReference type="PDBsum" id="2QEX"/>
<dbReference type="PDBsum" id="3CC2"/>
<dbReference type="PDBsum" id="3CC4"/>
<dbReference type="PDBsum" id="3CC7"/>
<dbReference type="PDBsum" id="3CCE"/>
<dbReference type="PDBsum" id="3CCJ"/>
<dbReference type="PDBsum" id="3CCL"/>
<dbReference type="PDBsum" id="3CCM"/>
<dbReference type="PDBsum" id="3CCQ"/>
<dbReference type="PDBsum" id="3CCR"/>
<dbReference type="PDBsum" id="3CCS"/>
<dbReference type="PDBsum" id="3CCU"/>
<dbReference type="PDBsum" id="3CCV"/>
<dbReference type="PDBsum" id="3CD6"/>
<dbReference type="PDBsum" id="3CMA"/>
<dbReference type="PDBsum" id="3CME"/>
<dbReference type="PDBsum" id="3CPW"/>
<dbReference type="PDBsum" id="3CXC"/>
<dbReference type="PDBsum" id="3G4S"/>
<dbReference type="PDBsum" id="3G6E"/>
<dbReference type="PDBsum" id="3G71"/>
<dbReference type="PDBsum" id="3I55"/>
<dbReference type="PDBsum" id="3I56"/>
<dbReference type="PDBsum" id="3OW2"/>
<dbReference type="PDBsum" id="4ADX"/>
<dbReference type="PDBsum" id="4V42"/>
<dbReference type="PDBsum" id="4V9F"/>
<dbReference type="SMR" id="P20276"/>
<dbReference type="IntAct" id="P20276">
    <property type="interactions" value="3"/>
</dbReference>
<dbReference type="STRING" id="272569.rrnAC1608"/>
<dbReference type="DrugBank" id="DB04865">
    <property type="generic name" value="Omacetaxine mepesuccinate"/>
</dbReference>
<dbReference type="PaxDb" id="272569-rrnAC1608"/>
<dbReference type="EnsemblBacteria" id="AAV46525">
    <property type="protein sequence ID" value="AAV46525"/>
    <property type="gene ID" value="rrnAC1608"/>
</dbReference>
<dbReference type="KEGG" id="hma:rrnAC1608"/>
<dbReference type="PATRIC" id="fig|272569.17.peg.2298"/>
<dbReference type="eggNOG" id="arCOG04067">
    <property type="taxonomic scope" value="Archaea"/>
</dbReference>
<dbReference type="HOGENOM" id="CLU_036235_0_1_2"/>
<dbReference type="EvolutionaryTrace" id="P20276"/>
<dbReference type="Proteomes" id="UP000001169">
    <property type="component" value="Chromosome I"/>
</dbReference>
<dbReference type="GO" id="GO:0022625">
    <property type="term" value="C:cytosolic large ribosomal subunit"/>
    <property type="evidence" value="ECO:0007669"/>
    <property type="project" value="TreeGrafter"/>
</dbReference>
<dbReference type="GO" id="GO:0019843">
    <property type="term" value="F:rRNA binding"/>
    <property type="evidence" value="ECO:0007669"/>
    <property type="project" value="UniProtKB-UniRule"/>
</dbReference>
<dbReference type="GO" id="GO:0003735">
    <property type="term" value="F:structural constituent of ribosome"/>
    <property type="evidence" value="ECO:0007669"/>
    <property type="project" value="InterPro"/>
</dbReference>
<dbReference type="GO" id="GO:0002181">
    <property type="term" value="P:cytoplasmic translation"/>
    <property type="evidence" value="ECO:0007669"/>
    <property type="project" value="TreeGrafter"/>
</dbReference>
<dbReference type="FunFam" id="2.30.30.30:FF:000001">
    <property type="entry name" value="50S ribosomal protein L2"/>
    <property type="match status" value="1"/>
</dbReference>
<dbReference type="FunFam" id="2.40.50.140:FF:000020">
    <property type="entry name" value="60S ribosomal protein L2"/>
    <property type="match status" value="1"/>
</dbReference>
<dbReference type="FunFam" id="4.10.950.10:FF:000002">
    <property type="entry name" value="60S ribosomal protein L2"/>
    <property type="match status" value="1"/>
</dbReference>
<dbReference type="Gene3D" id="2.30.30.30">
    <property type="match status" value="1"/>
</dbReference>
<dbReference type="Gene3D" id="2.40.50.140">
    <property type="entry name" value="Nucleic acid-binding proteins"/>
    <property type="match status" value="1"/>
</dbReference>
<dbReference type="Gene3D" id="4.10.950.10">
    <property type="entry name" value="Ribosomal protein L2, domain 3"/>
    <property type="match status" value="1"/>
</dbReference>
<dbReference type="HAMAP" id="MF_01320_A">
    <property type="entry name" value="Ribosomal_uL2_A"/>
    <property type="match status" value="1"/>
</dbReference>
<dbReference type="InterPro" id="IPR012340">
    <property type="entry name" value="NA-bd_OB-fold"/>
</dbReference>
<dbReference type="InterPro" id="IPR014722">
    <property type="entry name" value="Rib_uL2_dom2"/>
</dbReference>
<dbReference type="InterPro" id="IPR002171">
    <property type="entry name" value="Ribosomal_uL2"/>
</dbReference>
<dbReference type="InterPro" id="IPR023672">
    <property type="entry name" value="Ribosomal_uL2_arc_euk"/>
</dbReference>
<dbReference type="InterPro" id="IPR022669">
    <property type="entry name" value="Ribosomal_uL2_C"/>
</dbReference>
<dbReference type="InterPro" id="IPR022671">
    <property type="entry name" value="Ribosomal_uL2_CS"/>
</dbReference>
<dbReference type="InterPro" id="IPR014726">
    <property type="entry name" value="Ribosomal_uL2_dom3"/>
</dbReference>
<dbReference type="InterPro" id="IPR022666">
    <property type="entry name" value="Ribosomal_uL2_RNA-bd_dom"/>
</dbReference>
<dbReference type="InterPro" id="IPR008991">
    <property type="entry name" value="Translation_prot_SH3-like_sf"/>
</dbReference>
<dbReference type="NCBIfam" id="NF007180">
    <property type="entry name" value="PRK09612.1"/>
    <property type="match status" value="1"/>
</dbReference>
<dbReference type="PANTHER" id="PTHR13691:SF16">
    <property type="entry name" value="LARGE RIBOSOMAL SUBUNIT PROTEIN UL2"/>
    <property type="match status" value="1"/>
</dbReference>
<dbReference type="PANTHER" id="PTHR13691">
    <property type="entry name" value="RIBOSOMAL PROTEIN L2"/>
    <property type="match status" value="1"/>
</dbReference>
<dbReference type="Pfam" id="PF00181">
    <property type="entry name" value="Ribosomal_L2"/>
    <property type="match status" value="1"/>
</dbReference>
<dbReference type="Pfam" id="PF03947">
    <property type="entry name" value="Ribosomal_L2_C"/>
    <property type="match status" value="1"/>
</dbReference>
<dbReference type="PIRSF" id="PIRSF002158">
    <property type="entry name" value="Ribosomal_L2"/>
    <property type="match status" value="1"/>
</dbReference>
<dbReference type="SMART" id="SM01383">
    <property type="entry name" value="Ribosomal_L2"/>
    <property type="match status" value="1"/>
</dbReference>
<dbReference type="SMART" id="SM01382">
    <property type="entry name" value="Ribosomal_L2_C"/>
    <property type="match status" value="1"/>
</dbReference>
<dbReference type="SUPFAM" id="SSF50249">
    <property type="entry name" value="Nucleic acid-binding proteins"/>
    <property type="match status" value="1"/>
</dbReference>
<dbReference type="SUPFAM" id="SSF50104">
    <property type="entry name" value="Translation proteins SH3-like domain"/>
    <property type="match status" value="1"/>
</dbReference>
<dbReference type="PROSITE" id="PS00467">
    <property type="entry name" value="RIBOSOMAL_L2"/>
    <property type="match status" value="1"/>
</dbReference>
<evidence type="ECO:0000250" key="1"/>
<evidence type="ECO:0000256" key="2">
    <source>
        <dbReference type="SAM" id="MobiDB-lite"/>
    </source>
</evidence>
<evidence type="ECO:0000269" key="3">
    <source>
    </source>
</evidence>
<evidence type="ECO:0000269" key="4">
    <source>
    </source>
</evidence>
<evidence type="ECO:0000269" key="5">
    <source>
    </source>
</evidence>
<evidence type="ECO:0000305" key="6"/>
<evidence type="ECO:0007829" key="7">
    <source>
        <dbReference type="PDB" id="1VQ8"/>
    </source>
</evidence>
<evidence type="ECO:0007829" key="8">
    <source>
        <dbReference type="PDB" id="1VQ9"/>
    </source>
</evidence>
<evidence type="ECO:0007829" key="9">
    <source>
        <dbReference type="PDB" id="1YJN"/>
    </source>
</evidence>
<evidence type="ECO:0007829" key="10">
    <source>
        <dbReference type="PDB" id="3CC4"/>
    </source>
</evidence>
<evidence type="ECO:0007829" key="11">
    <source>
        <dbReference type="PDB" id="3CD6"/>
    </source>
</evidence>
<proteinExistence type="evidence at protein level"/>
<gene>
    <name type="primary">rpl2</name>
    <name type="ordered locus">rrnAC1608</name>
</gene>
<protein>
    <recommendedName>
        <fullName evidence="6">Large ribosomal subunit protein uL2</fullName>
    </recommendedName>
    <alternativeName>
        <fullName>50S ribosomal protein L2</fullName>
    </alternativeName>
    <alternativeName>
        <fullName>Hl4</fullName>
    </alternativeName>
    <alternativeName>
        <fullName>Hmal2</fullName>
    </alternativeName>
</protein>
<reference key="1">
    <citation type="journal article" date="1990" name="J. Biol. Chem.">
        <title>Organization and nucleotide sequence of a gene cluster coding for eight ribosomal proteins in the archaebacterium Halobacterium marismortui.</title>
        <authorList>
            <person name="Arndt E."/>
            <person name="Kroemer W."/>
            <person name="Hatakeyama T."/>
        </authorList>
    </citation>
    <scope>NUCLEOTIDE SEQUENCE [GENOMIC DNA]</scope>
    <scope>PARTIAL PROTEIN SEQUENCE</scope>
</reference>
<reference key="2">
    <citation type="journal article" date="2004" name="Genome Res.">
        <title>Genome sequence of Haloarcula marismortui: a halophilic archaeon from the Dead Sea.</title>
        <authorList>
            <person name="Baliga N.S."/>
            <person name="Bonneau R."/>
            <person name="Facciotti M.T."/>
            <person name="Pan M."/>
            <person name="Glusman G."/>
            <person name="Deutsch E.W."/>
            <person name="Shannon P."/>
            <person name="Chiu Y."/>
            <person name="Weng R.S."/>
            <person name="Gan R.R."/>
            <person name="Hung P."/>
            <person name="Date S.V."/>
            <person name="Marcotte E."/>
            <person name="Hood L."/>
            <person name="Ng W.V."/>
        </authorList>
    </citation>
    <scope>NUCLEOTIDE SEQUENCE [LARGE SCALE GENOMIC DNA]</scope>
    <source>
        <strain>ATCC 43049 / DSM 3752 / JCM 8966 / VKM B-1809</strain>
    </source>
</reference>
<reference key="3">
    <citation type="journal article" date="1998" name="Biochem. J.">
        <title>Functional implications of ribosomal protein L2 in protein biosynthesis as shown by in vivo replacement studies.</title>
        <authorList>
            <person name="Uehlein M."/>
            <person name="Wegloehner W."/>
            <person name="Urlaub H."/>
            <person name="Wittmann-Liebold B."/>
        </authorList>
    </citation>
    <scope>PROTEIN REPLACEMENT STUDIES IN E.COLI</scope>
    <scope>MUTAGENESIS</scope>
</reference>
<reference key="4">
    <citation type="journal article" date="1999" name="Nature">
        <title>Placement of protein and RNA structures into a 5 A-resolution map of the 50S ribosomal subunit.</title>
        <authorList>
            <person name="Ban N."/>
            <person name="Nissen P."/>
            <person name="Hansen J."/>
            <person name="Capel M."/>
            <person name="Moore P.B."/>
            <person name="Steitz T.A."/>
        </authorList>
    </citation>
    <scope>3D-STRUCTURE MODELING</scope>
</reference>
<reference key="5">
    <citation type="journal article" date="2000" name="Science">
        <title>The complete atomic structure of the large ribosomal subunit at 2.4 A resolution.</title>
        <authorList>
            <person name="Ban N."/>
            <person name="Nissen P."/>
            <person name="Hansen J."/>
            <person name="Moore P.B."/>
            <person name="Steitz T.A."/>
        </authorList>
    </citation>
    <scope>X-RAY CRYSTALLOGRAPHY (2.4 ANGSTROMS) OF THE 50S SUBUNIT</scope>
    <source>
        <strain>ATCC 43049 / DSM 3752 / JCM 8966 / VKM B-1809</strain>
    </source>
</reference>
<reference key="6">
    <citation type="journal article" date="2000" name="Science">
        <title>The structural basis of ribosome activity in peptide bond synthesis.</title>
        <authorList>
            <person name="Nissen P."/>
            <person name="Hansen J."/>
            <person name="Ban N."/>
            <person name="Moore P.B."/>
            <person name="Steitz T.A."/>
        </authorList>
    </citation>
    <scope>X-RAY CRYSTALLOGRAPHY (3.0 ANGSTROMS) OF THE 50S SUBUNIT</scope>
    <source>
        <strain>ATCC 43049 / DSM 3752 / JCM 8966 / VKM B-1809</strain>
    </source>
</reference>
<reference key="7">
    <citation type="journal article" date="2002" name="Nat. Struct. Biol.">
        <title>A pre-translocational intermediate in protein synthesis observed in crystals of enzymatically active 50S subunits.</title>
        <authorList>
            <person name="Schmeing T.M."/>
            <person name="Seila A.C."/>
            <person name="Hansen J.L."/>
            <person name="Freeborn B."/>
            <person name="Soukup J.K."/>
            <person name="Scaringe S.A."/>
            <person name="Strobel S.A."/>
            <person name="Moore P.B."/>
            <person name="Steitz T.A."/>
        </authorList>
    </citation>
    <scope>X-RAY CRYSTALLOGRAPHY (3.1 ANGSTROMS) OF THE 50S SUBUNIT</scope>
    <source>
        <strain>ATCC 43049 / DSM 3752 / JCM 8966 / VKM B-1809</strain>
    </source>
</reference>
<reference key="8">
    <citation type="journal article" date="2001" name="EMBO J.">
        <title>The kink-turn: a new RNA secondary structure motif.</title>
        <authorList>
            <person name="Klein D.J."/>
            <person name="Schmeing T.M."/>
            <person name="Moore P.B."/>
            <person name="Steitz T.A."/>
        </authorList>
    </citation>
    <scope>X-RAY CRYSTALLOGRAPHY (2.4 ANGSTROMS) OF THE 50S SUBUNIT</scope>
    <source>
        <strain>ATCC 43049 / DSM 3752 / JCM 8966 / VKM B-1809</strain>
    </source>
</reference>
<reference key="9">
    <citation type="journal article" date="2002" name="Mol. Cell">
        <title>The structures of four macrolide antibiotics bound to the large ribosomal subunit.</title>
        <authorList>
            <person name="Hansen J.L."/>
            <person name="Ippolito J.A."/>
            <person name="Ban N."/>
            <person name="Nissen P."/>
            <person name="Moore P.B."/>
            <person name="Steitz T.A."/>
        </authorList>
    </citation>
    <scope>X-RAY CRYSTALLOGRAPHY (3.0 ANGSTROMS) OF THE 50S SUBUNIT IN COMPLEX WITH FOUR MACROLIDE ANTIBIOTICS</scope>
    <source>
        <strain>ATCC 43049 / DSM 3752 / JCM 8966 / VKM B-1809</strain>
    </source>
</reference>
<reference key="10">
    <citation type="journal article" date="2002" name="Proc. Natl. Acad. Sci. U.S.A.">
        <title>Structural insights into peptide bond formation.</title>
        <authorList>
            <person name="Hansen J.L."/>
            <person name="Schmeing T.M."/>
            <person name="Moore P.B."/>
            <person name="Steitz T.A."/>
        </authorList>
    </citation>
    <scope>X-RAY CRYSTALLOGRAPHY (2.8 ANGSTROMS) OF THE 50S SUBUNIT</scope>
    <source>
        <strain>ATCC 43049 / DSM 3752 / JCM 8966 / VKM B-1809</strain>
    </source>
</reference>
<reference key="11">
    <citation type="journal article" date="2003" name="J. Mol. Biol.">
        <title>Structures of five antibiotics bound at the peptidyl transferase center of the large ribosomal subunit.</title>
        <authorList>
            <person name="Hansen J.L."/>
            <person name="Moore P.B."/>
            <person name="Steitz T.A."/>
        </authorList>
    </citation>
    <scope>X-RAY CRYSTALLOGRAPHY (3.0 ANGSTROMS) OF THE 50S SUBUNIT IN COMPLEX WITH FIVE ANTIBIOTICS AT THE PEPTIDYL TRANSFERASE CENTER</scope>
    <source>
        <strain>ATCC 43049 / DSM 3752 / JCM 8966 / VKM B-1809</strain>
    </source>
</reference>
<reference key="12">
    <citation type="journal article" date="2003" name="RNA">
        <title>Structures of deacylated tRNA mimics bound to the E site of the large ribosomal subunit.</title>
        <authorList>
            <person name="Schmeing T.M."/>
            <person name="Moore P.B."/>
            <person name="Steitz T.A."/>
        </authorList>
    </citation>
    <scope>X-RAY CRYSTALLOGRAPHY (2.9 ANGSTROMS) OF THE 50S SUBUNIT WITH TWO DIFFERENT E SITE SUBSTRATES</scope>
</reference>
<reference key="13">
    <citation type="journal article" date="2013" name="Acta Crystallogr. D">
        <title>Revisiting the Haloarcula marismortui 50S ribosomal subunit model.</title>
        <authorList>
            <person name="Gabdulkhakov A."/>
            <person name="Nikonov S."/>
            <person name="Garber M."/>
        </authorList>
    </citation>
    <scope>X-RAY CRYSTALLOGRAPHY (2.4 ANGSTROMS) OF THE 50S SUBUNIT</scope>
</reference>
<organism>
    <name type="scientific">Haloarcula marismortui (strain ATCC 43049 / DSM 3752 / JCM 8966 / VKM B-1809)</name>
    <name type="common">Halobacterium marismortui</name>
    <dbReference type="NCBI Taxonomy" id="272569"/>
    <lineage>
        <taxon>Archaea</taxon>
        <taxon>Methanobacteriati</taxon>
        <taxon>Methanobacteriota</taxon>
        <taxon>Stenosarchaea group</taxon>
        <taxon>Halobacteria</taxon>
        <taxon>Halobacteriales</taxon>
        <taxon>Haloarculaceae</taxon>
        <taxon>Haloarcula</taxon>
    </lineage>
</organism>
<sequence>MGRRIQGQRRGRGTSTFRAPSHRYKADLEHRKVEDGDVIAGTVVDIEHDPARSAPVAAVEFEDGDRRLILAPEGVGVGDELQVGVSAEIAPGNTLPLAEIPEGVPVCNVESSPGDGGKFARASGVNAQLLTHDRNVAVVKLPSGEMKRLDPQCRATIGVVAGGGRTDKPFVKAGNKHHKMKARGTKWPNVRGVAMNAVDHPFGGGGRQHPGKPKSISRNAPPGRKVGDIASKRTGRGGNE</sequence>